<sequence length="89" mass="10197">MSLSVEAKAKIVADFGRGTNDSGSTEVQVALLTAQINHLQGHFSEHKKDHHSRRGLLRMVSQRRKLLDYLKRKDVARYTSLIERLGLRR</sequence>
<accession>C6DKK6</accession>
<dbReference type="EMBL" id="CP001657">
    <property type="protein sequence ID" value="ACT11643.1"/>
    <property type="molecule type" value="Genomic_DNA"/>
</dbReference>
<dbReference type="RefSeq" id="WP_010279698.1">
    <property type="nucleotide sequence ID" value="NC_012917.1"/>
</dbReference>
<dbReference type="SMR" id="C6DKK6"/>
<dbReference type="STRING" id="561230.PC1_0588"/>
<dbReference type="GeneID" id="93388769"/>
<dbReference type="KEGG" id="pct:PC1_0588"/>
<dbReference type="eggNOG" id="COG0184">
    <property type="taxonomic scope" value="Bacteria"/>
</dbReference>
<dbReference type="HOGENOM" id="CLU_148518_0_0_6"/>
<dbReference type="OrthoDB" id="9799262at2"/>
<dbReference type="Proteomes" id="UP000002736">
    <property type="component" value="Chromosome"/>
</dbReference>
<dbReference type="GO" id="GO:0022627">
    <property type="term" value="C:cytosolic small ribosomal subunit"/>
    <property type="evidence" value="ECO:0007669"/>
    <property type="project" value="TreeGrafter"/>
</dbReference>
<dbReference type="GO" id="GO:0019843">
    <property type="term" value="F:rRNA binding"/>
    <property type="evidence" value="ECO:0007669"/>
    <property type="project" value="UniProtKB-UniRule"/>
</dbReference>
<dbReference type="GO" id="GO:0003735">
    <property type="term" value="F:structural constituent of ribosome"/>
    <property type="evidence" value="ECO:0007669"/>
    <property type="project" value="InterPro"/>
</dbReference>
<dbReference type="GO" id="GO:0006412">
    <property type="term" value="P:translation"/>
    <property type="evidence" value="ECO:0007669"/>
    <property type="project" value="UniProtKB-UniRule"/>
</dbReference>
<dbReference type="CDD" id="cd00353">
    <property type="entry name" value="Ribosomal_S15p_S13e"/>
    <property type="match status" value="1"/>
</dbReference>
<dbReference type="FunFam" id="1.10.287.10:FF:000002">
    <property type="entry name" value="30S ribosomal protein S15"/>
    <property type="match status" value="1"/>
</dbReference>
<dbReference type="Gene3D" id="6.10.250.3130">
    <property type="match status" value="1"/>
</dbReference>
<dbReference type="Gene3D" id="1.10.287.10">
    <property type="entry name" value="S15/NS1, RNA-binding"/>
    <property type="match status" value="1"/>
</dbReference>
<dbReference type="HAMAP" id="MF_01343_B">
    <property type="entry name" value="Ribosomal_uS15_B"/>
    <property type="match status" value="1"/>
</dbReference>
<dbReference type="InterPro" id="IPR000589">
    <property type="entry name" value="Ribosomal_uS15"/>
</dbReference>
<dbReference type="InterPro" id="IPR005290">
    <property type="entry name" value="Ribosomal_uS15_bac-type"/>
</dbReference>
<dbReference type="InterPro" id="IPR009068">
    <property type="entry name" value="uS15_NS1_RNA-bd_sf"/>
</dbReference>
<dbReference type="NCBIfam" id="TIGR00952">
    <property type="entry name" value="S15_bact"/>
    <property type="match status" value="1"/>
</dbReference>
<dbReference type="PANTHER" id="PTHR23321">
    <property type="entry name" value="RIBOSOMAL PROTEIN S15, BACTERIAL AND ORGANELLAR"/>
    <property type="match status" value="1"/>
</dbReference>
<dbReference type="PANTHER" id="PTHR23321:SF26">
    <property type="entry name" value="SMALL RIBOSOMAL SUBUNIT PROTEIN US15M"/>
    <property type="match status" value="1"/>
</dbReference>
<dbReference type="Pfam" id="PF00312">
    <property type="entry name" value="Ribosomal_S15"/>
    <property type="match status" value="1"/>
</dbReference>
<dbReference type="SMART" id="SM01387">
    <property type="entry name" value="Ribosomal_S15"/>
    <property type="match status" value="1"/>
</dbReference>
<dbReference type="SUPFAM" id="SSF47060">
    <property type="entry name" value="S15/NS1 RNA-binding domain"/>
    <property type="match status" value="1"/>
</dbReference>
<dbReference type="PROSITE" id="PS00362">
    <property type="entry name" value="RIBOSOMAL_S15"/>
    <property type="match status" value="1"/>
</dbReference>
<comment type="function">
    <text evidence="1">One of the primary rRNA binding proteins, it binds directly to 16S rRNA where it helps nucleate assembly of the platform of the 30S subunit by binding and bridging several RNA helices of the 16S rRNA.</text>
</comment>
<comment type="function">
    <text evidence="1">Forms an intersubunit bridge (bridge B4) with the 23S rRNA of the 50S subunit in the ribosome.</text>
</comment>
<comment type="subunit">
    <text evidence="1">Part of the 30S ribosomal subunit. Forms a bridge to the 50S subunit in the 70S ribosome, contacting the 23S rRNA.</text>
</comment>
<comment type="similarity">
    <text evidence="1">Belongs to the universal ribosomal protein uS15 family.</text>
</comment>
<reference key="1">
    <citation type="submission" date="2009-07" db="EMBL/GenBank/DDBJ databases">
        <title>Complete sequence of Pectobacterium carotovorum subsp. carotovorum PC1.</title>
        <authorList>
            <consortium name="US DOE Joint Genome Institute"/>
            <person name="Lucas S."/>
            <person name="Copeland A."/>
            <person name="Lapidus A."/>
            <person name="Glavina del Rio T."/>
            <person name="Tice H."/>
            <person name="Bruce D."/>
            <person name="Goodwin L."/>
            <person name="Pitluck S."/>
            <person name="Munk A.C."/>
            <person name="Brettin T."/>
            <person name="Detter J.C."/>
            <person name="Han C."/>
            <person name="Tapia R."/>
            <person name="Larimer F."/>
            <person name="Land M."/>
            <person name="Hauser L."/>
            <person name="Kyrpides N."/>
            <person name="Mikhailova N."/>
            <person name="Balakrishnan V."/>
            <person name="Glasner J."/>
            <person name="Perna N.T."/>
        </authorList>
    </citation>
    <scope>NUCLEOTIDE SEQUENCE [LARGE SCALE GENOMIC DNA]</scope>
    <source>
        <strain>PC1</strain>
    </source>
</reference>
<proteinExistence type="inferred from homology"/>
<name>RS15_PECCP</name>
<feature type="chain" id="PRO_1000214765" description="Small ribosomal subunit protein uS15">
    <location>
        <begin position="1"/>
        <end position="89"/>
    </location>
</feature>
<gene>
    <name evidence="1" type="primary">rpsO</name>
    <name type="ordered locus">PC1_0588</name>
</gene>
<evidence type="ECO:0000255" key="1">
    <source>
        <dbReference type="HAMAP-Rule" id="MF_01343"/>
    </source>
</evidence>
<evidence type="ECO:0000305" key="2"/>
<organism>
    <name type="scientific">Pectobacterium carotovorum subsp. carotovorum (strain PC1)</name>
    <dbReference type="NCBI Taxonomy" id="561230"/>
    <lineage>
        <taxon>Bacteria</taxon>
        <taxon>Pseudomonadati</taxon>
        <taxon>Pseudomonadota</taxon>
        <taxon>Gammaproteobacteria</taxon>
        <taxon>Enterobacterales</taxon>
        <taxon>Pectobacteriaceae</taxon>
        <taxon>Pectobacterium</taxon>
    </lineage>
</organism>
<keyword id="KW-0687">Ribonucleoprotein</keyword>
<keyword id="KW-0689">Ribosomal protein</keyword>
<keyword id="KW-0694">RNA-binding</keyword>
<keyword id="KW-0699">rRNA-binding</keyword>
<protein>
    <recommendedName>
        <fullName evidence="1">Small ribosomal subunit protein uS15</fullName>
    </recommendedName>
    <alternativeName>
        <fullName evidence="2">30S ribosomal protein S15</fullName>
    </alternativeName>
</protein>